<accession>O00634</accession>
<organism>
    <name type="scientific">Homo sapiens</name>
    <name type="common">Human</name>
    <dbReference type="NCBI Taxonomy" id="9606"/>
    <lineage>
        <taxon>Eukaryota</taxon>
        <taxon>Metazoa</taxon>
        <taxon>Chordata</taxon>
        <taxon>Craniata</taxon>
        <taxon>Vertebrata</taxon>
        <taxon>Euteleostomi</taxon>
        <taxon>Mammalia</taxon>
        <taxon>Eutheria</taxon>
        <taxon>Euarchontoglires</taxon>
        <taxon>Primates</taxon>
        <taxon>Haplorrhini</taxon>
        <taxon>Catarrhini</taxon>
        <taxon>Hominidae</taxon>
        <taxon>Homo</taxon>
    </lineage>
</organism>
<reference key="1">
    <citation type="journal article" date="1996" name="Genome Res.">
        <title>Generation of a transcriptional map for a 700-kb region surrounding the polycystic kidney disease type 1 (PKD1) and tuberous sclerosis type 2 (TSC2) disease genes on human chromosome 16p3.3.</title>
        <authorList>
            <person name="Burn T.C."/>
            <person name="Connors T.D."/>
            <person name="Van Raay T.J."/>
            <person name="Dackowski W.R."/>
            <person name="Millholland J.M."/>
            <person name="Klinger K.W."/>
            <person name="Landes G.M."/>
        </authorList>
    </citation>
    <scope>NUCLEOTIDE SEQUENCE [GENOMIC DNA]</scope>
</reference>
<reference key="2">
    <citation type="journal article" date="1997" name="Genomics">
        <title>The NTN2L gene encoding a novel human netrin maps to the autosomal dominant polycystic kidney disease region on chromosome 16p13.3.</title>
        <authorList>
            <person name="Van Raay T.J."/>
            <person name="Foskett S.M."/>
            <person name="Connors T.D."/>
            <person name="Klinger K.W."/>
            <person name="Landes G.M."/>
            <person name="Burn T.C."/>
        </authorList>
    </citation>
    <scope>NUCLEOTIDE SEQUENCE [GENOMIC DNA / MRNA]</scope>
    <scope>TISSUE SPECIFICITY</scope>
</reference>
<keyword id="KW-1015">Disulfide bond</keyword>
<keyword id="KW-0272">Extracellular matrix</keyword>
<keyword id="KW-0325">Glycoprotein</keyword>
<keyword id="KW-0424">Laminin EGF-like domain</keyword>
<keyword id="KW-1267">Proteomics identification</keyword>
<keyword id="KW-1185">Reference proteome</keyword>
<keyword id="KW-0677">Repeat</keyword>
<keyword id="KW-0964">Secreted</keyword>
<keyword id="KW-0732">Signal</keyword>
<proteinExistence type="evidence at protein level"/>
<evidence type="ECO:0000250" key="1"/>
<evidence type="ECO:0000255" key="2"/>
<evidence type="ECO:0000255" key="3">
    <source>
        <dbReference type="PROSITE-ProRule" id="PRU00295"/>
    </source>
</evidence>
<evidence type="ECO:0000255" key="4">
    <source>
        <dbReference type="PROSITE-ProRule" id="PRU00460"/>
    </source>
</evidence>
<evidence type="ECO:0000255" key="5">
    <source>
        <dbReference type="PROSITE-ProRule" id="PRU00466"/>
    </source>
</evidence>
<evidence type="ECO:0000256" key="6">
    <source>
        <dbReference type="SAM" id="MobiDB-lite"/>
    </source>
</evidence>
<evidence type="ECO:0000269" key="7">
    <source>
    </source>
</evidence>
<comment type="function">
    <text evidence="1">Netrins control guidance of CNS commissural axons and peripheral motor axons.</text>
</comment>
<comment type="interaction">
    <interactant intactId="EBI-10831998">
        <id>O00634</id>
    </interactant>
    <interactant intactId="EBI-10827752">
        <id>Q8NBI3</id>
        <label>DRAXIN</label>
    </interactant>
    <organismsDiffer>false</organismsDiffer>
    <experiments>2</experiments>
</comment>
<comment type="subcellular location">
    <subcellularLocation>
        <location evidence="1">Secreted</location>
        <location evidence="1">Extracellular space</location>
        <location evidence="1">Extracellular matrix</location>
    </subcellularLocation>
</comment>
<comment type="tissue specificity">
    <text evidence="7">Spinal cord.</text>
</comment>
<gene>
    <name type="primary">NTN3</name>
    <name type="synonym">NTN2L</name>
</gene>
<feature type="signal peptide" evidence="2">
    <location>
        <begin position="1"/>
        <end position="27"/>
    </location>
</feature>
<feature type="chain" id="PRO_0000017085" description="Netrin-3">
    <location>
        <begin position="28"/>
        <end position="580"/>
    </location>
</feature>
<feature type="domain" description="Laminin N-terminal" evidence="5">
    <location>
        <begin position="36"/>
        <end position="254"/>
    </location>
</feature>
<feature type="domain" description="Laminin EGF-like 1" evidence="4">
    <location>
        <begin position="255"/>
        <end position="308"/>
    </location>
</feature>
<feature type="domain" description="Laminin EGF-like 2" evidence="4">
    <location>
        <begin position="311"/>
        <end position="371"/>
    </location>
</feature>
<feature type="domain" description="Laminin EGF-like 3" evidence="4">
    <location>
        <begin position="374"/>
        <end position="421"/>
    </location>
</feature>
<feature type="domain" description="NTR" evidence="3">
    <location>
        <begin position="441"/>
        <end position="577"/>
    </location>
</feature>
<feature type="region of interest" description="Disordered" evidence="6">
    <location>
        <begin position="62"/>
        <end position="83"/>
    </location>
</feature>
<feature type="short sequence motif" description="Cell attachment site; atypical" evidence="2">
    <location>
        <begin position="500"/>
        <end position="502"/>
    </location>
</feature>
<feature type="glycosylation site" description="N-linked (GlcNAc...) asparagine" evidence="2">
    <location>
        <position position="104"/>
    </location>
</feature>
<feature type="glycosylation site" description="N-linked (GlcNAc...) asparagine" evidence="2">
    <location>
        <position position="387"/>
    </location>
</feature>
<feature type="disulfide bond" evidence="1">
    <location>
        <begin position="92"/>
        <end position="125"/>
    </location>
</feature>
<feature type="disulfide bond" evidence="1">
    <location>
        <begin position="255"/>
        <end position="264"/>
    </location>
</feature>
<feature type="disulfide bond" evidence="1">
    <location>
        <begin position="257"/>
        <end position="274"/>
    </location>
</feature>
<feature type="disulfide bond" evidence="1">
    <location>
        <begin position="276"/>
        <end position="285"/>
    </location>
</feature>
<feature type="disulfide bond" evidence="1">
    <location>
        <begin position="288"/>
        <end position="308"/>
    </location>
</feature>
<feature type="disulfide bond" evidence="1">
    <location>
        <begin position="311"/>
        <end position="320"/>
    </location>
</feature>
<feature type="disulfide bond" evidence="1">
    <location>
        <begin position="313"/>
        <end position="338"/>
    </location>
</feature>
<feature type="disulfide bond" evidence="1">
    <location>
        <begin position="341"/>
        <end position="350"/>
    </location>
</feature>
<feature type="disulfide bond" evidence="1">
    <location>
        <begin position="353"/>
        <end position="371"/>
    </location>
</feature>
<feature type="disulfide bond" evidence="1">
    <location>
        <begin position="374"/>
        <end position="386"/>
    </location>
</feature>
<feature type="disulfide bond" evidence="1">
    <location>
        <begin position="376"/>
        <end position="393"/>
    </location>
</feature>
<feature type="disulfide bond" evidence="1">
    <location>
        <begin position="395"/>
        <end position="404"/>
    </location>
</feature>
<feature type="disulfide bond" evidence="1">
    <location>
        <begin position="407"/>
        <end position="421"/>
    </location>
</feature>
<feature type="disulfide bond" evidence="1">
    <location>
        <begin position="441"/>
        <end position="514"/>
    </location>
</feature>
<feature type="disulfide bond" evidence="1">
    <location>
        <begin position="460"/>
        <end position="577"/>
    </location>
</feature>
<feature type="sequence variant" id="VAR_050086" description="In dbSNP:rs34818219.">
    <original>P</original>
    <variation>S</variation>
    <location>
        <position position="425"/>
    </location>
</feature>
<dbReference type="EMBL" id="U86759">
    <property type="protein sequence ID" value="AAC51247.1"/>
    <property type="molecule type" value="mRNA"/>
</dbReference>
<dbReference type="EMBL" id="U86758">
    <property type="protein sequence ID" value="AAC51246.1"/>
    <property type="molecule type" value="Genomic_DNA"/>
</dbReference>
<dbReference type="CCDS" id="CCDS10469.1"/>
<dbReference type="RefSeq" id="NP_006172.1">
    <property type="nucleotide sequence ID" value="NM_006181.3"/>
</dbReference>
<dbReference type="SMR" id="O00634"/>
<dbReference type="BioGRID" id="110972">
    <property type="interactions" value="5"/>
</dbReference>
<dbReference type="FunCoup" id="O00634">
    <property type="interactions" value="2"/>
</dbReference>
<dbReference type="IntAct" id="O00634">
    <property type="interactions" value="2"/>
</dbReference>
<dbReference type="STRING" id="9606.ENSP00000293973"/>
<dbReference type="GlyConnect" id="1543">
    <property type="glycosylation" value="1 N-Linked glycan (1 site)"/>
</dbReference>
<dbReference type="GlyCosmos" id="O00634">
    <property type="glycosylation" value="2 sites, 1 glycan"/>
</dbReference>
<dbReference type="GlyGen" id="O00634">
    <property type="glycosylation" value="3 sites, 3 N-linked glycans (2 sites)"/>
</dbReference>
<dbReference type="iPTMnet" id="O00634"/>
<dbReference type="PhosphoSitePlus" id="O00634"/>
<dbReference type="BioMuta" id="NTN3"/>
<dbReference type="jPOST" id="O00634"/>
<dbReference type="MassIVE" id="O00634"/>
<dbReference type="PaxDb" id="9606-ENSP00000293973"/>
<dbReference type="PeptideAtlas" id="O00634"/>
<dbReference type="ProteomicsDB" id="48004"/>
<dbReference type="Antibodypedia" id="66015">
    <property type="antibodies" value="89 antibodies from 21 providers"/>
</dbReference>
<dbReference type="DNASU" id="4917"/>
<dbReference type="Ensembl" id="ENST00000293973.2">
    <property type="protein sequence ID" value="ENSP00000293973.1"/>
    <property type="gene ID" value="ENSG00000162068.2"/>
</dbReference>
<dbReference type="GeneID" id="4917"/>
<dbReference type="KEGG" id="hsa:4917"/>
<dbReference type="MANE-Select" id="ENST00000293973.2">
    <property type="protein sequence ID" value="ENSP00000293973.1"/>
    <property type="RefSeq nucleotide sequence ID" value="NM_006181.3"/>
    <property type="RefSeq protein sequence ID" value="NP_006172.1"/>
</dbReference>
<dbReference type="UCSC" id="uc002cqj.3">
    <property type="organism name" value="human"/>
</dbReference>
<dbReference type="AGR" id="HGNC:8030"/>
<dbReference type="CTD" id="4917"/>
<dbReference type="DisGeNET" id="4917"/>
<dbReference type="GeneCards" id="NTN3"/>
<dbReference type="HGNC" id="HGNC:8030">
    <property type="gene designation" value="NTN3"/>
</dbReference>
<dbReference type="HPA" id="ENSG00000162068">
    <property type="expression patterns" value="Not detected"/>
</dbReference>
<dbReference type="MIM" id="602349">
    <property type="type" value="gene"/>
</dbReference>
<dbReference type="neXtProt" id="NX_O00634"/>
<dbReference type="OpenTargets" id="ENSG00000162068"/>
<dbReference type="PharmGKB" id="PA164724231"/>
<dbReference type="VEuPathDB" id="HostDB:ENSG00000162068"/>
<dbReference type="eggNOG" id="KOG3512">
    <property type="taxonomic scope" value="Eukaryota"/>
</dbReference>
<dbReference type="GeneTree" id="ENSGT00940000153882"/>
<dbReference type="HOGENOM" id="CLU_018213_2_0_1"/>
<dbReference type="InParanoid" id="O00634"/>
<dbReference type="OMA" id="SHCRPAR"/>
<dbReference type="OrthoDB" id="9972745at2759"/>
<dbReference type="PAN-GO" id="O00634">
    <property type="GO annotations" value="6 GO annotations based on evolutionary models"/>
</dbReference>
<dbReference type="PhylomeDB" id="O00634"/>
<dbReference type="TreeFam" id="TF352481"/>
<dbReference type="PathwayCommons" id="O00634"/>
<dbReference type="Reactome" id="R-HSA-525793">
    <property type="pathway name" value="Myogenesis"/>
</dbReference>
<dbReference type="SignaLink" id="O00634"/>
<dbReference type="SIGNOR" id="O00634"/>
<dbReference type="BioGRID-ORCS" id="4917">
    <property type="hits" value="8 hits in 1143 CRISPR screens"/>
</dbReference>
<dbReference type="GenomeRNAi" id="4917"/>
<dbReference type="Pharos" id="O00634">
    <property type="development level" value="Tbio"/>
</dbReference>
<dbReference type="PRO" id="PR:O00634"/>
<dbReference type="Proteomes" id="UP000005640">
    <property type="component" value="Chromosome 16"/>
</dbReference>
<dbReference type="RNAct" id="O00634">
    <property type="molecule type" value="protein"/>
</dbReference>
<dbReference type="Bgee" id="ENSG00000162068">
    <property type="expression patterns" value="Expressed in pancreatic ductal cell and 37 other cell types or tissues"/>
</dbReference>
<dbReference type="GO" id="GO:0005576">
    <property type="term" value="C:extracellular region"/>
    <property type="evidence" value="ECO:0007669"/>
    <property type="project" value="UniProtKB-KW"/>
</dbReference>
<dbReference type="GO" id="GO:0005794">
    <property type="term" value="C:Golgi apparatus"/>
    <property type="evidence" value="ECO:0007669"/>
    <property type="project" value="Ensembl"/>
</dbReference>
<dbReference type="GO" id="GO:0000981">
    <property type="term" value="F:DNA-binding transcription factor activity, RNA polymerase II-specific"/>
    <property type="evidence" value="ECO:0000318"/>
    <property type="project" value="GO_Central"/>
</dbReference>
<dbReference type="GO" id="GO:0000978">
    <property type="term" value="F:RNA polymerase II cis-regulatory region sequence-specific DNA binding"/>
    <property type="evidence" value="ECO:0000318"/>
    <property type="project" value="GO_Central"/>
</dbReference>
<dbReference type="GO" id="GO:0005102">
    <property type="term" value="F:signaling receptor binding"/>
    <property type="evidence" value="ECO:0007669"/>
    <property type="project" value="Ensembl"/>
</dbReference>
<dbReference type="GO" id="GO:0007411">
    <property type="term" value="P:axon guidance"/>
    <property type="evidence" value="ECO:0000303"/>
    <property type="project" value="UniProtKB"/>
</dbReference>
<dbReference type="GO" id="GO:0006357">
    <property type="term" value="P:regulation of transcription by RNA polymerase II"/>
    <property type="evidence" value="ECO:0000318"/>
    <property type="project" value="GO_Central"/>
</dbReference>
<dbReference type="CDD" id="cd00055">
    <property type="entry name" value="EGF_Lam"/>
    <property type="match status" value="3"/>
</dbReference>
<dbReference type="FunFam" id="2.10.25.10:FF:000081">
    <property type="entry name" value="Netrin 1"/>
    <property type="match status" value="1"/>
</dbReference>
<dbReference type="FunFam" id="2.10.25.10:FF:000048">
    <property type="entry name" value="Netrin 3"/>
    <property type="match status" value="1"/>
</dbReference>
<dbReference type="FunFam" id="2.60.120.260:FF:000080">
    <property type="entry name" value="Netrin 3"/>
    <property type="match status" value="1"/>
</dbReference>
<dbReference type="FunFam" id="2.40.50.120:FF:000018">
    <property type="entry name" value="netrin-3 isoform X2"/>
    <property type="match status" value="1"/>
</dbReference>
<dbReference type="Gene3D" id="2.40.50.120">
    <property type="match status" value="1"/>
</dbReference>
<dbReference type="Gene3D" id="2.60.120.260">
    <property type="entry name" value="Galactose-binding domain-like"/>
    <property type="match status" value="1"/>
</dbReference>
<dbReference type="Gene3D" id="2.10.25.10">
    <property type="entry name" value="Laminin"/>
    <property type="match status" value="2"/>
</dbReference>
<dbReference type="InterPro" id="IPR050440">
    <property type="entry name" value="Laminin/Netrin_ECM"/>
</dbReference>
<dbReference type="InterPro" id="IPR008211">
    <property type="entry name" value="Laminin_N"/>
</dbReference>
<dbReference type="InterPro" id="IPR002049">
    <property type="entry name" value="LE_dom"/>
</dbReference>
<dbReference type="InterPro" id="IPR056863">
    <property type="entry name" value="LMN_ATRN_NET-like_EGF"/>
</dbReference>
<dbReference type="InterPro" id="IPR001134">
    <property type="entry name" value="Netrin_domain"/>
</dbReference>
<dbReference type="InterPro" id="IPR018933">
    <property type="entry name" value="Netrin_module_non-TIMP"/>
</dbReference>
<dbReference type="InterPro" id="IPR008993">
    <property type="entry name" value="TIMP-like_OB-fold"/>
</dbReference>
<dbReference type="PANTHER" id="PTHR10574:SF292">
    <property type="entry name" value="NETRIN-3"/>
    <property type="match status" value="1"/>
</dbReference>
<dbReference type="PANTHER" id="PTHR10574">
    <property type="entry name" value="NETRIN/LAMININ-RELATED"/>
    <property type="match status" value="1"/>
</dbReference>
<dbReference type="Pfam" id="PF00053">
    <property type="entry name" value="EGF_laminin"/>
    <property type="match status" value="2"/>
</dbReference>
<dbReference type="Pfam" id="PF24973">
    <property type="entry name" value="EGF_LMN_ATRN"/>
    <property type="match status" value="1"/>
</dbReference>
<dbReference type="Pfam" id="PF00055">
    <property type="entry name" value="Laminin_N"/>
    <property type="match status" value="1"/>
</dbReference>
<dbReference type="Pfam" id="PF01759">
    <property type="entry name" value="NTR"/>
    <property type="match status" value="1"/>
</dbReference>
<dbReference type="SMART" id="SM00643">
    <property type="entry name" value="C345C"/>
    <property type="match status" value="1"/>
</dbReference>
<dbReference type="SMART" id="SM00180">
    <property type="entry name" value="EGF_Lam"/>
    <property type="match status" value="3"/>
</dbReference>
<dbReference type="SMART" id="SM00136">
    <property type="entry name" value="LamNT"/>
    <property type="match status" value="1"/>
</dbReference>
<dbReference type="SUPFAM" id="SSF57196">
    <property type="entry name" value="EGF/Laminin"/>
    <property type="match status" value="3"/>
</dbReference>
<dbReference type="SUPFAM" id="SSF50242">
    <property type="entry name" value="TIMP-like"/>
    <property type="match status" value="1"/>
</dbReference>
<dbReference type="PROSITE" id="PS00022">
    <property type="entry name" value="EGF_1"/>
    <property type="match status" value="2"/>
</dbReference>
<dbReference type="PROSITE" id="PS01248">
    <property type="entry name" value="EGF_LAM_1"/>
    <property type="match status" value="3"/>
</dbReference>
<dbReference type="PROSITE" id="PS50027">
    <property type="entry name" value="EGF_LAM_2"/>
    <property type="match status" value="3"/>
</dbReference>
<dbReference type="PROSITE" id="PS51117">
    <property type="entry name" value="LAMININ_NTER"/>
    <property type="match status" value="1"/>
</dbReference>
<dbReference type="PROSITE" id="PS50189">
    <property type="entry name" value="NTR"/>
    <property type="match status" value="1"/>
</dbReference>
<protein>
    <recommendedName>
        <fullName>Netrin-3</fullName>
    </recommendedName>
    <alternativeName>
        <fullName>Netrin-2-like protein</fullName>
    </alternativeName>
</protein>
<name>NET3_HUMAN</name>
<sequence>MPGWPWGLLLTAGTLFAALSPGPPAPADPCHDEGGAPRGCVPGLVNAALGREVLASSTCGRPATRACDASDPRRAHSPALLTSPGGTASPLCWRSESLPRAPLNVTLTVPLGKAFELVFVSLRFCSAPPASVALLKSQDHGRSWAPLGFFSSHCDLDYGRLPAPANGPAGPGPEALCFPAPLAQPDGSGLLAFSMQDSSPPGLDLDSSPVLQDWVTATDVRVVLTRPSTAGDPRDMEAVVPYSYAATDLQVGGRCKCNGHASRCLLDTQGHLICDCRHGTEGPDCGRCKPFYCDRPWQRATARESHACLACSCNGHARRCRFNMELYRLSGRRSGGVCLNCRHNTAGRHCHYCREGFYRDPGRALSDRRACRACDCHPVGAAGKTCNQTTGQCPCKDGVTGLTCNRCAPGFQQSRSPVAPCVKTPIPGPTEDSSPVQPQDCDSHCKPARGSYRISLKKFCKKDYAVQVAVGARGEARGAWTRFPVAVLAVFRSGEERARRGSSALWVPAGDAACGCPRLLPGRRYLLLGGGPGAAAGGAGGRGPGLIAARGSLVLPWRDAWTRRLRRLQRRERRGRCSAA</sequence>